<protein>
    <recommendedName>
        <fullName>Actin-like protein 7A</fullName>
    </recommendedName>
    <alternativeName>
        <fullName>Actin-like-7-alpha</fullName>
    </alternativeName>
</protein>
<organism>
    <name type="scientific">Homo sapiens</name>
    <name type="common">Human</name>
    <dbReference type="NCBI Taxonomy" id="9606"/>
    <lineage>
        <taxon>Eukaryota</taxon>
        <taxon>Metazoa</taxon>
        <taxon>Chordata</taxon>
        <taxon>Craniata</taxon>
        <taxon>Vertebrata</taxon>
        <taxon>Euteleostomi</taxon>
        <taxon>Mammalia</taxon>
        <taxon>Eutheria</taxon>
        <taxon>Euarchontoglires</taxon>
        <taxon>Primates</taxon>
        <taxon>Haplorrhini</taxon>
        <taxon>Catarrhini</taxon>
        <taxon>Hominidae</taxon>
        <taxon>Homo</taxon>
    </lineage>
</organism>
<feature type="chain" id="PRO_0000089137" description="Actin-like protein 7A">
    <location>
        <begin position="1"/>
        <end position="435"/>
    </location>
</feature>
<feature type="region of interest" description="Disordered" evidence="2">
    <location>
        <begin position="1"/>
        <end position="64"/>
    </location>
</feature>
<feature type="region of interest" description="Required for interaction with TES">
    <location>
        <begin position="31"/>
        <end position="51"/>
    </location>
</feature>
<feature type="compositionally biased region" description="Low complexity" evidence="2">
    <location>
        <begin position="20"/>
        <end position="31"/>
    </location>
</feature>
<feature type="compositionally biased region" description="Basic and acidic residues" evidence="2">
    <location>
        <begin position="55"/>
        <end position="64"/>
    </location>
</feature>
<feature type="sequence variant" id="VAR_031425" description="In dbSNP:rs368653764." evidence="4">
    <original>R</original>
    <variation>C</variation>
    <location>
        <position position="45"/>
    </location>
</feature>
<feature type="sequence variant" id="VAR_088980" description="In SPGF86; likely pathogenic." evidence="9">
    <location>
        <begin position="49"/>
        <end position="435"/>
    </location>
</feature>
<feature type="sequence variant" id="VAR_088981" description="In SPGF86; likely pathogenic; loss of protein expression in patient sperm." evidence="8">
    <location>
        <begin position="155"/>
        <end position="435"/>
    </location>
</feature>
<feature type="sequence variant" id="VAR_033460" description="In dbSNP:rs35995497.">
    <original>A</original>
    <variation>P</variation>
    <location>
        <position position="161"/>
    </location>
</feature>
<feature type="sequence variant" id="VAR_085430" description="In SPGF86; uncertain significance; dbSNP:rs371671871." evidence="6 10">
    <original>A</original>
    <variation>T</variation>
    <location>
        <position position="245"/>
    </location>
</feature>
<feature type="sequence variant" id="VAR_088982" description="In SPGF86; uncertain significance." evidence="10">
    <original>G</original>
    <variation>A</variation>
    <location>
        <position position="246"/>
    </location>
</feature>
<feature type="sequence variant" id="VAR_024362" description="In dbSNP:rs7872077." evidence="4">
    <original>V</original>
    <variation>M</variation>
    <location>
        <position position="340"/>
    </location>
</feature>
<feature type="sequence variant" id="VAR_060998" description="In dbSNP:rs56031956.">
    <original>L</original>
    <variation>V</variation>
    <location>
        <position position="343"/>
    </location>
</feature>
<feature type="sequence variant" id="VAR_088983" description="In SPGF86; uncertain significance; dbSNP:rs779515458." evidence="8">
    <original>G</original>
    <variation>R</variation>
    <location>
        <position position="362"/>
    </location>
</feature>
<feature type="mutagenesis site" description="Abolishes interaction with TES." evidence="5">
    <original>A</original>
    <variation>Y</variation>
    <location>
        <position position="31"/>
    </location>
</feature>
<feature type="mutagenesis site" description="Abolishes interaction with TES." evidence="5">
    <original>A</original>
    <variation>Y</variation>
    <location>
        <position position="41"/>
    </location>
</feature>
<feature type="strand" evidence="13">
    <location>
        <begin position="42"/>
        <end position="44"/>
    </location>
</feature>
<gene>
    <name type="primary">ACTL7A</name>
</gene>
<comment type="function">
    <text evidence="1 6">Essential for normal spermatogenesis and male fertility. Required for normal sperm head morphology, acroplaxome formation, acrosome attachment, and acrosome granule stability. May anchor and stabilize acrosomal adherence to the acroplaxome at least in part by facilitating the presence of F-actin in the subacrosomal space (By similarity). May play an important role in formation and fusion of Golgi-derived vesicles during acrosome biogenesis (PubMed:32923619).</text>
</comment>
<comment type="subunit">
    <text evidence="5 7 11">Interacts (via N-terminus) with TES (via LIM domain 2). Heterodimer with TES; the heterodimer interacts with ENAH to form a heterotrimer (PubMed:21278383). Interacts with ACTL9 (PubMed:33626338). Interacts with CYLC1; the interaction may be relevant for proper acrosome attachment to the nuclear envelope (PubMed:38573307).</text>
</comment>
<comment type="interaction">
    <interactant intactId="EBI-10825302">
        <id>Q9Y615</id>
    </interactant>
    <interactant intactId="EBI-2561654">
        <id>Q9UGI8</id>
        <label>TES</label>
    </interactant>
    <organismsDiffer>false</organismsDiffer>
    <experiments>9</experiments>
</comment>
<comment type="subcellular location">
    <subcellularLocation>
        <location evidence="1">Cytoplasm</location>
        <location evidence="1">Cytoskeleton</location>
    </subcellularLocation>
    <subcellularLocation>
        <location evidence="1">Golgi apparatus</location>
    </subcellularLocation>
    <subcellularLocation>
        <location evidence="1">Cytoplasm</location>
    </subcellularLocation>
    <subcellularLocation>
        <location evidence="1">Nucleus</location>
    </subcellularLocation>
    <subcellularLocation>
        <location evidence="6 8">Cytoplasmic vesicle</location>
        <location evidence="6 8">Secretory vesicle</location>
        <location evidence="6 8">Acrosome</location>
    </subcellularLocation>
    <text evidence="1">Detected at the Golgi apparatus during acrosome biogenesis. Detected at the subacrosomal layer in round spermatids. Detected in sperm head and tail.</text>
</comment>
<comment type="tissue specificity">
    <text evidence="3">Strongly expressed in testis. Also expressed in other tissues.</text>
</comment>
<comment type="disease" evidence="6 8 9 10">
    <disease id="DI-06755">
        <name>Spermatogenic failure 86</name>
        <acronym>SPGF86</acronym>
        <description>An autosomal recessive male infertility disorder characterized by acrosomal defects of the spermatozoa, resulting in oocyte activation deficiency and fertilization failure.</description>
        <dbReference type="MIM" id="620499"/>
    </disease>
    <text>The disease is caused by variants affecting the gene represented in this entry.</text>
</comment>
<comment type="similarity">
    <text evidence="12">Belongs to the actin family.</text>
</comment>
<accession>Q9Y615</accession>
<accession>B2RC83</accession>
<accession>Q5JSV0</accession>
<evidence type="ECO:0000250" key="1">
    <source>
        <dbReference type="UniProtKB" id="Q9QY84"/>
    </source>
</evidence>
<evidence type="ECO:0000256" key="2">
    <source>
        <dbReference type="SAM" id="MobiDB-lite"/>
    </source>
</evidence>
<evidence type="ECO:0000269" key="3">
    <source>
    </source>
</evidence>
<evidence type="ECO:0000269" key="4">
    <source>
    </source>
</evidence>
<evidence type="ECO:0000269" key="5">
    <source>
    </source>
</evidence>
<evidence type="ECO:0000269" key="6">
    <source>
    </source>
</evidence>
<evidence type="ECO:0000269" key="7">
    <source>
    </source>
</evidence>
<evidence type="ECO:0000269" key="8">
    <source>
    </source>
</evidence>
<evidence type="ECO:0000269" key="9">
    <source>
    </source>
</evidence>
<evidence type="ECO:0000269" key="10">
    <source>
    </source>
</evidence>
<evidence type="ECO:0000269" key="11">
    <source>
    </source>
</evidence>
<evidence type="ECO:0000305" key="12"/>
<evidence type="ECO:0007829" key="13">
    <source>
        <dbReference type="PDB" id="2XQN"/>
    </source>
</evidence>
<name>ACL7A_HUMAN</name>
<dbReference type="EMBL" id="AF113526">
    <property type="protein sequence ID" value="AAD44109.1"/>
    <property type="molecule type" value="Genomic_DNA"/>
</dbReference>
<dbReference type="EMBL" id="AB284520">
    <property type="protein sequence ID" value="BAF41971.1"/>
    <property type="molecule type" value="Genomic_DNA"/>
</dbReference>
<dbReference type="EMBL" id="AK314981">
    <property type="protein sequence ID" value="BAG37480.1"/>
    <property type="molecule type" value="mRNA"/>
</dbReference>
<dbReference type="EMBL" id="AL359692">
    <property type="status" value="NOT_ANNOTATED_CDS"/>
    <property type="molecule type" value="Genomic_DNA"/>
</dbReference>
<dbReference type="EMBL" id="CH471105">
    <property type="protein sequence ID" value="EAW59026.1"/>
    <property type="molecule type" value="Genomic_DNA"/>
</dbReference>
<dbReference type="EMBL" id="BC014610">
    <property type="protein sequence ID" value="AAH14610.1"/>
    <property type="molecule type" value="mRNA"/>
</dbReference>
<dbReference type="CCDS" id="CCDS6772.1"/>
<dbReference type="RefSeq" id="NP_006678.1">
    <property type="nucleotide sequence ID" value="NM_006687.4"/>
</dbReference>
<dbReference type="PDB" id="2XQN">
    <property type="method" value="X-ray"/>
    <property type="resolution" value="2.62 A"/>
    <property type="chains" value="A=1-65"/>
</dbReference>
<dbReference type="PDBsum" id="2XQN"/>
<dbReference type="SMR" id="Q9Y615"/>
<dbReference type="BioGRID" id="116089">
    <property type="interactions" value="4"/>
</dbReference>
<dbReference type="FunCoup" id="Q9Y615">
    <property type="interactions" value="5"/>
</dbReference>
<dbReference type="IntAct" id="Q9Y615">
    <property type="interactions" value="3"/>
</dbReference>
<dbReference type="STRING" id="9606.ENSP00000334300"/>
<dbReference type="iPTMnet" id="Q9Y615"/>
<dbReference type="PhosphoSitePlus" id="Q9Y615"/>
<dbReference type="BioMuta" id="ACTL7A"/>
<dbReference type="DMDM" id="27923725"/>
<dbReference type="MassIVE" id="Q9Y615"/>
<dbReference type="PaxDb" id="9606-ENSP00000334300"/>
<dbReference type="PeptideAtlas" id="Q9Y615"/>
<dbReference type="ProteomicsDB" id="86577"/>
<dbReference type="Antibodypedia" id="14911">
    <property type="antibodies" value="161 antibodies from 24 providers"/>
</dbReference>
<dbReference type="DNASU" id="10881"/>
<dbReference type="Ensembl" id="ENST00000333999.5">
    <property type="protein sequence ID" value="ENSP00000334300.3"/>
    <property type="gene ID" value="ENSG00000187003.7"/>
</dbReference>
<dbReference type="GeneID" id="10881"/>
<dbReference type="KEGG" id="hsa:10881"/>
<dbReference type="MANE-Select" id="ENST00000333999.5">
    <property type="protein sequence ID" value="ENSP00000334300.3"/>
    <property type="RefSeq nucleotide sequence ID" value="NM_006687.4"/>
    <property type="RefSeq protein sequence ID" value="NP_006678.1"/>
</dbReference>
<dbReference type="UCSC" id="uc004bdj.3">
    <property type="organism name" value="human"/>
</dbReference>
<dbReference type="AGR" id="HGNC:161"/>
<dbReference type="CTD" id="10881"/>
<dbReference type="DisGeNET" id="10881"/>
<dbReference type="GeneCards" id="ACTL7A"/>
<dbReference type="HGNC" id="HGNC:161">
    <property type="gene designation" value="ACTL7A"/>
</dbReference>
<dbReference type="HPA" id="ENSG00000187003">
    <property type="expression patterns" value="Tissue enriched (testis)"/>
</dbReference>
<dbReference type="MalaCards" id="ACTL7A"/>
<dbReference type="MIM" id="604303">
    <property type="type" value="gene"/>
</dbReference>
<dbReference type="MIM" id="620499">
    <property type="type" value="phenotype"/>
</dbReference>
<dbReference type="neXtProt" id="NX_Q9Y615"/>
<dbReference type="OpenTargets" id="ENSG00000187003"/>
<dbReference type="PharmGKB" id="PA24483"/>
<dbReference type="VEuPathDB" id="HostDB:ENSG00000187003"/>
<dbReference type="eggNOG" id="KOG0676">
    <property type="taxonomic scope" value="Eukaryota"/>
</dbReference>
<dbReference type="GeneTree" id="ENSGT00940000162158"/>
<dbReference type="HOGENOM" id="CLU_027965_0_2_1"/>
<dbReference type="InParanoid" id="Q9Y615"/>
<dbReference type="OMA" id="DMWEYLF"/>
<dbReference type="OrthoDB" id="9925380at2759"/>
<dbReference type="PAN-GO" id="Q9Y615">
    <property type="GO annotations" value="3 GO annotations based on evolutionary models"/>
</dbReference>
<dbReference type="PhylomeDB" id="Q9Y615"/>
<dbReference type="TreeFam" id="TF354237"/>
<dbReference type="PathwayCommons" id="Q9Y615"/>
<dbReference type="SignaLink" id="Q9Y615"/>
<dbReference type="BioGRID-ORCS" id="10881">
    <property type="hits" value="14 hits in 1147 CRISPR screens"/>
</dbReference>
<dbReference type="ChiTaRS" id="ACTL7A">
    <property type="organism name" value="human"/>
</dbReference>
<dbReference type="EvolutionaryTrace" id="Q9Y615"/>
<dbReference type="GeneWiki" id="ACTL7A"/>
<dbReference type="GenomeRNAi" id="10881"/>
<dbReference type="Pharos" id="Q9Y615">
    <property type="development level" value="Tbio"/>
</dbReference>
<dbReference type="PRO" id="PR:Q9Y615"/>
<dbReference type="Proteomes" id="UP000005640">
    <property type="component" value="Chromosome 9"/>
</dbReference>
<dbReference type="RNAct" id="Q9Y615">
    <property type="molecule type" value="protein"/>
</dbReference>
<dbReference type="Bgee" id="ENSG00000187003">
    <property type="expression patterns" value="Expressed in left testis and 66 other cell types or tissues"/>
</dbReference>
<dbReference type="ExpressionAtlas" id="Q9Y615">
    <property type="expression patterns" value="baseline and differential"/>
</dbReference>
<dbReference type="GO" id="GO:0001669">
    <property type="term" value="C:acrosomal vesicle"/>
    <property type="evidence" value="ECO:0000314"/>
    <property type="project" value="UniProtKB"/>
</dbReference>
<dbReference type="GO" id="GO:0005737">
    <property type="term" value="C:cytoplasm"/>
    <property type="evidence" value="ECO:0000250"/>
    <property type="project" value="UniProtKB"/>
</dbReference>
<dbReference type="GO" id="GO:0005856">
    <property type="term" value="C:cytoskeleton"/>
    <property type="evidence" value="ECO:0000304"/>
    <property type="project" value="ProtInc"/>
</dbReference>
<dbReference type="GO" id="GO:0005794">
    <property type="term" value="C:Golgi apparatus"/>
    <property type="evidence" value="ECO:0007669"/>
    <property type="project" value="UniProtKB-SubCell"/>
</dbReference>
<dbReference type="GO" id="GO:0001673">
    <property type="term" value="C:male germ cell nucleus"/>
    <property type="evidence" value="ECO:0007669"/>
    <property type="project" value="Ensembl"/>
</dbReference>
<dbReference type="GO" id="GO:0031514">
    <property type="term" value="C:motile cilium"/>
    <property type="evidence" value="ECO:0007669"/>
    <property type="project" value="Ensembl"/>
</dbReference>
<dbReference type="GO" id="GO:0005634">
    <property type="term" value="C:nucleus"/>
    <property type="evidence" value="ECO:0007005"/>
    <property type="project" value="UniProtKB"/>
</dbReference>
<dbReference type="GO" id="GO:0032991">
    <property type="term" value="C:protein-containing complex"/>
    <property type="evidence" value="ECO:0000314"/>
    <property type="project" value="UniProtKB"/>
</dbReference>
<dbReference type="GO" id="GO:0005200">
    <property type="term" value="F:structural constituent of cytoskeleton"/>
    <property type="evidence" value="ECO:0000304"/>
    <property type="project" value="ProtInc"/>
</dbReference>
<dbReference type="GO" id="GO:0001675">
    <property type="term" value="P:acrosome assembly"/>
    <property type="evidence" value="ECO:0000250"/>
    <property type="project" value="UniProtKB"/>
</dbReference>
<dbReference type="GO" id="GO:0009566">
    <property type="term" value="P:fertilization"/>
    <property type="evidence" value="ECO:0000250"/>
    <property type="project" value="UniProtKB"/>
</dbReference>
<dbReference type="GO" id="GO:0007338">
    <property type="term" value="P:single fertilization"/>
    <property type="evidence" value="ECO:0007669"/>
    <property type="project" value="UniProtKB-KW"/>
</dbReference>
<dbReference type="GO" id="GO:0007286">
    <property type="term" value="P:spermatid development"/>
    <property type="evidence" value="ECO:0000250"/>
    <property type="project" value="UniProtKB"/>
</dbReference>
<dbReference type="CDD" id="cd10214">
    <property type="entry name" value="ASKHA_NBD_ACTL7"/>
    <property type="match status" value="1"/>
</dbReference>
<dbReference type="FunFam" id="3.90.640.10:FF:000007">
    <property type="entry name" value="Actin like 7B"/>
    <property type="match status" value="1"/>
</dbReference>
<dbReference type="FunFam" id="3.30.420.40:FF:000050">
    <property type="entry name" value="Actin, alpha skeletal muscle"/>
    <property type="match status" value="1"/>
</dbReference>
<dbReference type="Gene3D" id="3.30.420.40">
    <property type="match status" value="2"/>
</dbReference>
<dbReference type="Gene3D" id="3.90.640.10">
    <property type="entry name" value="Actin, Chain A, domain 4"/>
    <property type="match status" value="1"/>
</dbReference>
<dbReference type="IDEAL" id="IID00687"/>
<dbReference type="InterPro" id="IPR004000">
    <property type="entry name" value="Actin"/>
</dbReference>
<dbReference type="InterPro" id="IPR031769">
    <property type="entry name" value="ACTL7A_N"/>
</dbReference>
<dbReference type="InterPro" id="IPR043129">
    <property type="entry name" value="ATPase_NBD"/>
</dbReference>
<dbReference type="PANTHER" id="PTHR11937">
    <property type="entry name" value="ACTIN"/>
    <property type="match status" value="1"/>
</dbReference>
<dbReference type="Pfam" id="PF00022">
    <property type="entry name" value="Actin"/>
    <property type="match status" value="1"/>
</dbReference>
<dbReference type="Pfam" id="PF16840">
    <property type="entry name" value="ACTL7A_N"/>
    <property type="match status" value="1"/>
</dbReference>
<dbReference type="PRINTS" id="PR00190">
    <property type="entry name" value="ACTIN"/>
</dbReference>
<dbReference type="SMART" id="SM00268">
    <property type="entry name" value="ACTIN"/>
    <property type="match status" value="1"/>
</dbReference>
<dbReference type="SUPFAM" id="SSF53067">
    <property type="entry name" value="Actin-like ATPase domain"/>
    <property type="match status" value="2"/>
</dbReference>
<reference key="1">
    <citation type="journal article" date="1999" name="Genomics">
        <title>Cloning, mapping, and expression of two novel actin genes, actin-like-7A (ACTL7A) and actin-like-7B (ACTL7B), from the familial dysautonomia candidate region on 9q31.</title>
        <authorList>
            <person name="Chadwick B.P."/>
            <person name="Mull J."/>
            <person name="Helbling L.A."/>
            <person name="Gill S."/>
            <person name="Leyne M."/>
            <person name="Robbins C.M."/>
            <person name="Pinkett H.W."/>
            <person name="Makalowska I."/>
            <person name="Maayan C."/>
            <person name="Blumenfeld A."/>
            <person name="Axelrod F.B."/>
            <person name="Brownstein M."/>
            <person name="Gusella J.F."/>
            <person name="Slaugenhaupt S.A."/>
        </authorList>
    </citation>
    <scope>NUCLEOTIDE SEQUENCE [GENOMIC DNA]</scope>
    <scope>TISSUE SPECIFICITY</scope>
</reference>
<reference key="2">
    <citation type="journal article" date="2007" name="Soc. Reprod. Fertil. Suppl.">
        <title>Single nucleotide polymorphisms: discovery of the genetic causes of male infertility.</title>
        <authorList>
            <person name="Tanaka H."/>
            <person name="Hirose M."/>
            <person name="Tokuhiro K."/>
            <person name="Matsuoka Y."/>
            <person name="Miyagawa Y."/>
            <person name="Tsujimura A."/>
            <person name="Okuyama A."/>
            <person name="Nishimune Y."/>
        </authorList>
    </citation>
    <scope>NUCLEOTIDE SEQUENCE [GENOMIC DNA]</scope>
    <scope>VARIANTS CYS-45 AND MET-340</scope>
    <source>
        <tissue>Blood</tissue>
    </source>
</reference>
<reference key="3">
    <citation type="journal article" date="2004" name="Nat. Genet.">
        <title>Complete sequencing and characterization of 21,243 full-length human cDNAs.</title>
        <authorList>
            <person name="Ota T."/>
            <person name="Suzuki Y."/>
            <person name="Nishikawa T."/>
            <person name="Otsuki T."/>
            <person name="Sugiyama T."/>
            <person name="Irie R."/>
            <person name="Wakamatsu A."/>
            <person name="Hayashi K."/>
            <person name="Sato H."/>
            <person name="Nagai K."/>
            <person name="Kimura K."/>
            <person name="Makita H."/>
            <person name="Sekine M."/>
            <person name="Obayashi M."/>
            <person name="Nishi T."/>
            <person name="Shibahara T."/>
            <person name="Tanaka T."/>
            <person name="Ishii S."/>
            <person name="Yamamoto J."/>
            <person name="Saito K."/>
            <person name="Kawai Y."/>
            <person name="Isono Y."/>
            <person name="Nakamura Y."/>
            <person name="Nagahari K."/>
            <person name="Murakami K."/>
            <person name="Yasuda T."/>
            <person name="Iwayanagi T."/>
            <person name="Wagatsuma M."/>
            <person name="Shiratori A."/>
            <person name="Sudo H."/>
            <person name="Hosoiri T."/>
            <person name="Kaku Y."/>
            <person name="Kodaira H."/>
            <person name="Kondo H."/>
            <person name="Sugawara M."/>
            <person name="Takahashi M."/>
            <person name="Kanda K."/>
            <person name="Yokoi T."/>
            <person name="Furuya T."/>
            <person name="Kikkawa E."/>
            <person name="Omura Y."/>
            <person name="Abe K."/>
            <person name="Kamihara K."/>
            <person name="Katsuta N."/>
            <person name="Sato K."/>
            <person name="Tanikawa M."/>
            <person name="Yamazaki M."/>
            <person name="Ninomiya K."/>
            <person name="Ishibashi T."/>
            <person name="Yamashita H."/>
            <person name="Murakawa K."/>
            <person name="Fujimori K."/>
            <person name="Tanai H."/>
            <person name="Kimata M."/>
            <person name="Watanabe M."/>
            <person name="Hiraoka S."/>
            <person name="Chiba Y."/>
            <person name="Ishida S."/>
            <person name="Ono Y."/>
            <person name="Takiguchi S."/>
            <person name="Watanabe S."/>
            <person name="Yosida M."/>
            <person name="Hotuta T."/>
            <person name="Kusano J."/>
            <person name="Kanehori K."/>
            <person name="Takahashi-Fujii A."/>
            <person name="Hara H."/>
            <person name="Tanase T.-O."/>
            <person name="Nomura Y."/>
            <person name="Togiya S."/>
            <person name="Komai F."/>
            <person name="Hara R."/>
            <person name="Takeuchi K."/>
            <person name="Arita M."/>
            <person name="Imose N."/>
            <person name="Musashino K."/>
            <person name="Yuuki H."/>
            <person name="Oshima A."/>
            <person name="Sasaki N."/>
            <person name="Aotsuka S."/>
            <person name="Yoshikawa Y."/>
            <person name="Matsunawa H."/>
            <person name="Ichihara T."/>
            <person name="Shiohata N."/>
            <person name="Sano S."/>
            <person name="Moriya S."/>
            <person name="Momiyama H."/>
            <person name="Satoh N."/>
            <person name="Takami S."/>
            <person name="Terashima Y."/>
            <person name="Suzuki O."/>
            <person name="Nakagawa S."/>
            <person name="Senoh A."/>
            <person name="Mizoguchi H."/>
            <person name="Goto Y."/>
            <person name="Shimizu F."/>
            <person name="Wakebe H."/>
            <person name="Hishigaki H."/>
            <person name="Watanabe T."/>
            <person name="Sugiyama A."/>
            <person name="Takemoto M."/>
            <person name="Kawakami B."/>
            <person name="Yamazaki M."/>
            <person name="Watanabe K."/>
            <person name="Kumagai A."/>
            <person name="Itakura S."/>
            <person name="Fukuzumi Y."/>
            <person name="Fujimori Y."/>
            <person name="Komiyama M."/>
            <person name="Tashiro H."/>
            <person name="Tanigami A."/>
            <person name="Fujiwara T."/>
            <person name="Ono T."/>
            <person name="Yamada K."/>
            <person name="Fujii Y."/>
            <person name="Ozaki K."/>
            <person name="Hirao M."/>
            <person name="Ohmori Y."/>
            <person name="Kawabata A."/>
            <person name="Hikiji T."/>
            <person name="Kobatake N."/>
            <person name="Inagaki H."/>
            <person name="Ikema Y."/>
            <person name="Okamoto S."/>
            <person name="Okitani R."/>
            <person name="Kawakami T."/>
            <person name="Noguchi S."/>
            <person name="Itoh T."/>
            <person name="Shigeta K."/>
            <person name="Senba T."/>
            <person name="Matsumura K."/>
            <person name="Nakajima Y."/>
            <person name="Mizuno T."/>
            <person name="Morinaga M."/>
            <person name="Sasaki M."/>
            <person name="Togashi T."/>
            <person name="Oyama M."/>
            <person name="Hata H."/>
            <person name="Watanabe M."/>
            <person name="Komatsu T."/>
            <person name="Mizushima-Sugano J."/>
            <person name="Satoh T."/>
            <person name="Shirai Y."/>
            <person name="Takahashi Y."/>
            <person name="Nakagawa K."/>
            <person name="Okumura K."/>
            <person name="Nagase T."/>
            <person name="Nomura N."/>
            <person name="Kikuchi H."/>
            <person name="Masuho Y."/>
            <person name="Yamashita R."/>
            <person name="Nakai K."/>
            <person name="Yada T."/>
            <person name="Nakamura Y."/>
            <person name="Ohara O."/>
            <person name="Isogai T."/>
            <person name="Sugano S."/>
        </authorList>
    </citation>
    <scope>NUCLEOTIDE SEQUENCE [LARGE SCALE MRNA]</scope>
    <source>
        <tissue>Testis</tissue>
    </source>
</reference>
<reference key="4">
    <citation type="journal article" date="2004" name="Nature">
        <title>DNA sequence and analysis of human chromosome 9.</title>
        <authorList>
            <person name="Humphray S.J."/>
            <person name="Oliver K."/>
            <person name="Hunt A.R."/>
            <person name="Plumb R.W."/>
            <person name="Loveland J.E."/>
            <person name="Howe K.L."/>
            <person name="Andrews T.D."/>
            <person name="Searle S."/>
            <person name="Hunt S.E."/>
            <person name="Scott C.E."/>
            <person name="Jones M.C."/>
            <person name="Ainscough R."/>
            <person name="Almeida J.P."/>
            <person name="Ambrose K.D."/>
            <person name="Ashwell R.I.S."/>
            <person name="Babbage A.K."/>
            <person name="Babbage S."/>
            <person name="Bagguley C.L."/>
            <person name="Bailey J."/>
            <person name="Banerjee R."/>
            <person name="Barker D.J."/>
            <person name="Barlow K.F."/>
            <person name="Bates K."/>
            <person name="Beasley H."/>
            <person name="Beasley O."/>
            <person name="Bird C.P."/>
            <person name="Bray-Allen S."/>
            <person name="Brown A.J."/>
            <person name="Brown J.Y."/>
            <person name="Burford D."/>
            <person name="Burrill W."/>
            <person name="Burton J."/>
            <person name="Carder C."/>
            <person name="Carter N.P."/>
            <person name="Chapman J.C."/>
            <person name="Chen Y."/>
            <person name="Clarke G."/>
            <person name="Clark S.Y."/>
            <person name="Clee C.M."/>
            <person name="Clegg S."/>
            <person name="Collier R.E."/>
            <person name="Corby N."/>
            <person name="Crosier M."/>
            <person name="Cummings A.T."/>
            <person name="Davies J."/>
            <person name="Dhami P."/>
            <person name="Dunn M."/>
            <person name="Dutta I."/>
            <person name="Dyer L.W."/>
            <person name="Earthrowl M.E."/>
            <person name="Faulkner L."/>
            <person name="Fleming C.J."/>
            <person name="Frankish A."/>
            <person name="Frankland J.A."/>
            <person name="French L."/>
            <person name="Fricker D.G."/>
            <person name="Garner P."/>
            <person name="Garnett J."/>
            <person name="Ghori J."/>
            <person name="Gilbert J.G.R."/>
            <person name="Glison C."/>
            <person name="Grafham D.V."/>
            <person name="Gribble S."/>
            <person name="Griffiths C."/>
            <person name="Griffiths-Jones S."/>
            <person name="Grocock R."/>
            <person name="Guy J."/>
            <person name="Hall R.E."/>
            <person name="Hammond S."/>
            <person name="Harley J.L."/>
            <person name="Harrison E.S.I."/>
            <person name="Hart E.A."/>
            <person name="Heath P.D."/>
            <person name="Henderson C.D."/>
            <person name="Hopkins B.L."/>
            <person name="Howard P.J."/>
            <person name="Howden P.J."/>
            <person name="Huckle E."/>
            <person name="Johnson C."/>
            <person name="Johnson D."/>
            <person name="Joy A.A."/>
            <person name="Kay M."/>
            <person name="Keenan S."/>
            <person name="Kershaw J.K."/>
            <person name="Kimberley A.M."/>
            <person name="King A."/>
            <person name="Knights A."/>
            <person name="Laird G.K."/>
            <person name="Langford C."/>
            <person name="Lawlor S."/>
            <person name="Leongamornlert D.A."/>
            <person name="Leversha M."/>
            <person name="Lloyd C."/>
            <person name="Lloyd D.M."/>
            <person name="Lovell J."/>
            <person name="Martin S."/>
            <person name="Mashreghi-Mohammadi M."/>
            <person name="Matthews L."/>
            <person name="McLaren S."/>
            <person name="McLay K.E."/>
            <person name="McMurray A."/>
            <person name="Milne S."/>
            <person name="Nickerson T."/>
            <person name="Nisbett J."/>
            <person name="Nordsiek G."/>
            <person name="Pearce A.V."/>
            <person name="Peck A.I."/>
            <person name="Porter K.M."/>
            <person name="Pandian R."/>
            <person name="Pelan S."/>
            <person name="Phillimore B."/>
            <person name="Povey S."/>
            <person name="Ramsey Y."/>
            <person name="Rand V."/>
            <person name="Scharfe M."/>
            <person name="Sehra H.K."/>
            <person name="Shownkeen R."/>
            <person name="Sims S.K."/>
            <person name="Skuce C.D."/>
            <person name="Smith M."/>
            <person name="Steward C.A."/>
            <person name="Swarbreck D."/>
            <person name="Sycamore N."/>
            <person name="Tester J."/>
            <person name="Thorpe A."/>
            <person name="Tracey A."/>
            <person name="Tromans A."/>
            <person name="Thomas D.W."/>
            <person name="Wall M."/>
            <person name="Wallis J.M."/>
            <person name="West A.P."/>
            <person name="Whitehead S.L."/>
            <person name="Willey D.L."/>
            <person name="Williams S.A."/>
            <person name="Wilming L."/>
            <person name="Wray P.W."/>
            <person name="Young L."/>
            <person name="Ashurst J.L."/>
            <person name="Coulson A."/>
            <person name="Blocker H."/>
            <person name="Durbin R.M."/>
            <person name="Sulston J.E."/>
            <person name="Hubbard T."/>
            <person name="Jackson M.J."/>
            <person name="Bentley D.R."/>
            <person name="Beck S."/>
            <person name="Rogers J."/>
            <person name="Dunham I."/>
        </authorList>
    </citation>
    <scope>NUCLEOTIDE SEQUENCE [LARGE SCALE GENOMIC DNA]</scope>
</reference>
<reference key="5">
    <citation type="submission" date="2005-07" db="EMBL/GenBank/DDBJ databases">
        <authorList>
            <person name="Mural R.J."/>
            <person name="Istrail S."/>
            <person name="Sutton G.G."/>
            <person name="Florea L."/>
            <person name="Halpern A.L."/>
            <person name="Mobarry C.M."/>
            <person name="Lippert R."/>
            <person name="Walenz B."/>
            <person name="Shatkay H."/>
            <person name="Dew I."/>
            <person name="Miller J.R."/>
            <person name="Flanigan M.J."/>
            <person name="Edwards N.J."/>
            <person name="Bolanos R."/>
            <person name="Fasulo D."/>
            <person name="Halldorsson B.V."/>
            <person name="Hannenhalli S."/>
            <person name="Turner R."/>
            <person name="Yooseph S."/>
            <person name="Lu F."/>
            <person name="Nusskern D.R."/>
            <person name="Shue B.C."/>
            <person name="Zheng X.H."/>
            <person name="Zhong F."/>
            <person name="Delcher A.L."/>
            <person name="Huson D.H."/>
            <person name="Kravitz S.A."/>
            <person name="Mouchard L."/>
            <person name="Reinert K."/>
            <person name="Remington K.A."/>
            <person name="Clark A.G."/>
            <person name="Waterman M.S."/>
            <person name="Eichler E.E."/>
            <person name="Adams M.D."/>
            <person name="Hunkapiller M.W."/>
            <person name="Myers E.W."/>
            <person name="Venter J.C."/>
        </authorList>
    </citation>
    <scope>NUCLEOTIDE SEQUENCE [LARGE SCALE GENOMIC DNA]</scope>
</reference>
<reference key="6">
    <citation type="journal article" date="2004" name="Genome Res.">
        <title>The status, quality, and expansion of the NIH full-length cDNA project: the Mammalian Gene Collection (MGC).</title>
        <authorList>
            <consortium name="The MGC Project Team"/>
        </authorList>
    </citation>
    <scope>NUCLEOTIDE SEQUENCE [LARGE SCALE MRNA]</scope>
    <source>
        <tissue>Testis</tissue>
    </source>
</reference>
<reference key="7">
    <citation type="journal article" date="2011" name="J. Biol. Chem.">
        <title>Molecular recognition of the Tes LIM2-3 domains by the actin-related protein Arp7A.</title>
        <authorList>
            <person name="Boeda B."/>
            <person name="Knowles P.P."/>
            <person name="Briggs D.C."/>
            <person name="Murray-Rust J."/>
            <person name="Soriano E."/>
            <person name="Garvalov B.K."/>
            <person name="McDonald N.Q."/>
            <person name="Way M."/>
        </authorList>
    </citation>
    <scope>X-RAY CRYSTALLOGRAPHY (2.62 ANGSTROMS) OF 1-65 IN COMPLEX WITH ENAH AND TES</scope>
    <scope>SUBUNIT</scope>
    <scope>MUTAGENESIS OF ALA-31 AND ALA-41</scope>
</reference>
<reference key="8">
    <citation type="journal article" date="2020" name="Sci. Adv.">
        <title>Disruption in ACTL7A causes acrosomal ultrastructural defects in human and mouse sperm as a novel male factor inducing early embryonic arrest.</title>
        <authorList>
            <person name="Xin A."/>
            <person name="Qu R."/>
            <person name="Chen G."/>
            <person name="Zhang L."/>
            <person name="Chen J."/>
            <person name="Tao C."/>
            <person name="Fu J."/>
            <person name="Tang J."/>
            <person name="Ru Y."/>
            <person name="Chen Y."/>
            <person name="Peng X."/>
            <person name="Shi H."/>
            <person name="Zhang F."/>
            <person name="Sun X."/>
        </authorList>
    </citation>
    <scope>INVOLVEMENT IN SPGF86</scope>
    <scope>VARIANT SPGF86 THR-245</scope>
    <scope>SUBCELLULAR LOCATION</scope>
    <scope>FUNCTION</scope>
</reference>
<reference key="9">
    <citation type="journal article" date="2021" name="Am. J. Hum. Genet.">
        <title>Homozygous pathogenic variants in ACTL9 cause fertilization failure and male infertility in humans and mice.</title>
        <authorList>
            <person name="Dai J."/>
            <person name="Zhang T."/>
            <person name="Guo J."/>
            <person name="Zhou Q."/>
            <person name="Gu Y."/>
            <person name="Zhang J."/>
            <person name="Hu L."/>
            <person name="Zong Y."/>
            <person name="Song J."/>
            <person name="Zhang S."/>
            <person name="Dai C."/>
            <person name="Gong F."/>
            <person name="Lu G."/>
            <person name="Zheng W."/>
            <person name="Lin G."/>
        </authorList>
    </citation>
    <scope>INTERACTION WITH ACTL9</scope>
</reference>
<reference key="10">
    <citation type="journal article" date="2024" name="Elife">
        <title>Disruption in CYLC1 leads to acrosome detachment, sperm head deformity, and male in/subfertility in humans and mice.</title>
        <authorList>
            <person name="Jin H.J."/>
            <person name="Fan Y."/>
            <person name="Yang X."/>
            <person name="Dong Y."/>
            <person name="Zhang X.Z."/>
            <person name="Geng X.Y."/>
            <person name="Yan Z."/>
            <person name="Wu L."/>
            <person name="Ma M."/>
            <person name="Li B."/>
            <person name="Lyu Q."/>
            <person name="Pan Y."/>
            <person name="Liu M."/>
            <person name="Kuang Y."/>
            <person name="Chen S.R."/>
        </authorList>
    </citation>
    <scope>INTERACTION WITH CYLC1</scope>
</reference>
<reference key="11">
    <citation type="journal article" date="2021" name="Hum. Reprod.">
        <title>Novel bi-allelic variants in ACTL7A are associated with male infertility and total fertilization failure.</title>
        <authorList>
            <person name="Wang J."/>
            <person name="Zhang J."/>
            <person name="Sun X."/>
            <person name="Lin Y."/>
            <person name="Cai L."/>
            <person name="Cui Y."/>
            <person name="Liu J."/>
            <person name="Liu M."/>
            <person name="Yang X."/>
        </authorList>
    </citation>
    <scope>VARIANTS SPGF86 155-ARG--PHE-435 DEL AND ARG-362</scope>
    <scope>CHARACTERIZATION OF VARIANTS SPGF86 155-ARG--PHE-435 DEL AND ARG-362</scope>
    <scope>SUBCELLULAR LOCATION</scope>
</reference>
<reference key="12">
    <citation type="journal article" date="2023" name="Clin. Genet.">
        <title>Novel variants in ACTL7A and PLCZ1 are associated with male infertility and total fertilization failure.</title>
        <authorList>
            <person name="Zhao S."/>
            <person name="Cui Y."/>
            <person name="Guo S."/>
            <person name="Liu B."/>
            <person name="Bian Y."/>
            <person name="Zhao S."/>
            <person name="Chen Z."/>
            <person name="Zhao H."/>
        </authorList>
    </citation>
    <scope>VARIANT SPGF86 49-SER--LYS-345 DEL</scope>
</reference>
<reference key="13">
    <citation type="journal article" date="2023" name="Hum. Reprod.">
        <title>ACROSIN deficiency causes total fertilization failure in humans by preventing the sperm from penetrating the zona pellucida.</title>
        <authorList>
            <person name="Hua R."/>
            <person name="Xue R."/>
            <person name="Liu Y."/>
            <person name="Li Y."/>
            <person name="Sha X."/>
            <person name="Li K."/>
            <person name="Gao Y."/>
            <person name="Shen Q."/>
            <person name="Lv M."/>
            <person name="Xu Y."/>
            <person name="Zhang Z."/>
            <person name="He X."/>
            <person name="Cao Y."/>
            <person name="Wu H."/>
        </authorList>
    </citation>
    <scope>VARIANTS SPGF86 THR-245 AND ALA-246</scope>
</reference>
<keyword id="KW-0002">3D-structure</keyword>
<keyword id="KW-0963">Cytoplasm</keyword>
<keyword id="KW-0968">Cytoplasmic vesicle</keyword>
<keyword id="KW-0206">Cytoskeleton</keyword>
<keyword id="KW-0221">Differentiation</keyword>
<keyword id="KW-0225">Disease variant</keyword>
<keyword id="KW-0278">Fertilization</keyword>
<keyword id="KW-0333">Golgi apparatus</keyword>
<keyword id="KW-0539">Nucleus</keyword>
<keyword id="KW-1267">Proteomics identification</keyword>
<keyword id="KW-1185">Reference proteome</keyword>
<keyword id="KW-0744">Spermatogenesis</keyword>
<sequence length="435" mass="48644">MWAPPAAIMGDGPTKKVGNQAPLQTQALQTASLRDGPAKRAVWVRHTSSEPQEPTESKAAKERPKQEVTKAVVVDLGTGYCKCGFAGLPRPTHKISTTVGKPYMETAKTGDNRKETFVGQELNNTNVHLKLVNPLRHGIIVDWDTVQDIWEYLFRQEMKIAPEEHAVLVSDPPLSPHTNREKYAEMLFEAFNTPAMHIAYQSRLSMYSYGRTSGLVVEVGHGVSYVVPIYEGYPLPSITGRLDYAGSDLTAYLLGLLNSAGNEFTQDQMGIVEDIKKKCCFVALDPIEEKKVPLSEHTIRYVLPDGKEIQLCQERFLCSEMFFKPSLIKSMQLGLHTQTVSCLNKCDIALKRDLMGNILLCGGSTMLSGFPNRLQKELSSMCPNDTPQVNVLPERDSAVWTGGSILASLQGFQPLWVHRFEYEEHGPFFLYRRCF</sequence>
<proteinExistence type="evidence at protein level"/>